<keyword id="KW-1015">Disulfide bond</keyword>
<keyword id="KW-0574">Periplasm</keyword>
<keyword id="KW-0646">Protease inhibitor</keyword>
<keyword id="KW-0722">Serine protease inhibitor</keyword>
<keyword id="KW-0732">Signal</keyword>
<gene>
    <name evidence="1" type="primary">eco</name>
    <name type="ordered locus">UTI89_C2489</name>
</gene>
<evidence type="ECO:0000255" key="1">
    <source>
        <dbReference type="HAMAP-Rule" id="MF_00706"/>
    </source>
</evidence>
<evidence type="ECO:0000305" key="2"/>
<name>ECOT_ECOUT</name>
<protein>
    <recommendedName>
        <fullName evidence="1">Ecotin</fullName>
    </recommendedName>
</protein>
<dbReference type="EMBL" id="CP000243">
    <property type="protein sequence ID" value="ABE07956.1"/>
    <property type="status" value="ALT_INIT"/>
    <property type="molecule type" value="Genomic_DNA"/>
</dbReference>
<dbReference type="SMR" id="Q1R9K8"/>
<dbReference type="MEROPS" id="I11.001"/>
<dbReference type="KEGG" id="eci:UTI89_C2489"/>
<dbReference type="HOGENOM" id="CLU_111565_0_0_6"/>
<dbReference type="Proteomes" id="UP000001952">
    <property type="component" value="Chromosome"/>
</dbReference>
<dbReference type="GO" id="GO:0042597">
    <property type="term" value="C:periplasmic space"/>
    <property type="evidence" value="ECO:0007669"/>
    <property type="project" value="UniProtKB-SubCell"/>
</dbReference>
<dbReference type="GO" id="GO:0004867">
    <property type="term" value="F:serine-type endopeptidase inhibitor activity"/>
    <property type="evidence" value="ECO:0007669"/>
    <property type="project" value="UniProtKB-UniRule"/>
</dbReference>
<dbReference type="CDD" id="cd00242">
    <property type="entry name" value="Ecotin"/>
    <property type="match status" value="1"/>
</dbReference>
<dbReference type="FunFam" id="2.60.40.550:FF:000001">
    <property type="entry name" value="Ecotin"/>
    <property type="match status" value="1"/>
</dbReference>
<dbReference type="FunFam" id="4.10.1230.10:FF:000001">
    <property type="entry name" value="Ecotin"/>
    <property type="match status" value="1"/>
</dbReference>
<dbReference type="Gene3D" id="2.60.40.550">
    <property type="entry name" value="Ecotin"/>
    <property type="match status" value="1"/>
</dbReference>
<dbReference type="Gene3D" id="4.10.1230.10">
    <property type="entry name" value="Ecotin, trypsin inhibitor"/>
    <property type="match status" value="1"/>
</dbReference>
<dbReference type="HAMAP" id="MF_00706">
    <property type="entry name" value="Ecotin"/>
    <property type="match status" value="1"/>
</dbReference>
<dbReference type="InterPro" id="IPR027438">
    <property type="entry name" value="Ecotin_C"/>
</dbReference>
<dbReference type="InterPro" id="IPR036198">
    <property type="entry name" value="Ecotin_sf"/>
</dbReference>
<dbReference type="InterPro" id="IPR005658">
    <property type="entry name" value="Prot_inh_ecotin"/>
</dbReference>
<dbReference type="InterPro" id="IPR023084">
    <property type="entry name" value="Prot_inh_ecotin_gammaproteobac"/>
</dbReference>
<dbReference type="NCBIfam" id="NF002987">
    <property type="entry name" value="PRK03719.1"/>
    <property type="match status" value="1"/>
</dbReference>
<dbReference type="PANTHER" id="PTHR35890">
    <property type="match status" value="1"/>
</dbReference>
<dbReference type="PANTHER" id="PTHR35890:SF3">
    <property type="entry name" value="ECOTIN"/>
    <property type="match status" value="1"/>
</dbReference>
<dbReference type="Pfam" id="PF03974">
    <property type="entry name" value="Ecotin"/>
    <property type="match status" value="1"/>
</dbReference>
<dbReference type="PIRSF" id="PIRSF006865">
    <property type="entry name" value="Prot_inh_ecotin"/>
    <property type="match status" value="1"/>
</dbReference>
<dbReference type="SUPFAM" id="SSF49772">
    <property type="entry name" value="Ecotin, trypsin inhibitor"/>
    <property type="match status" value="1"/>
</dbReference>
<proteinExistence type="inferred from homology"/>
<comment type="function">
    <text evidence="1">General inhibitor of pancreatic serine proteases: inhibits chymotrypsin, trypsin, elastases, factor X, kallikrein as well as a variety of other proteases.</text>
</comment>
<comment type="subunit">
    <text evidence="1">Homodimer.</text>
</comment>
<comment type="subcellular location">
    <subcellularLocation>
        <location evidence="1">Periplasm</location>
    </subcellularLocation>
</comment>
<comment type="similarity">
    <text evidence="1">Belongs to the protease inhibitor I11 (ecotin) family.</text>
</comment>
<comment type="sequence caution" evidence="2">
    <conflict type="erroneous initiation">
        <sequence resource="EMBL-CDS" id="ABE07956"/>
    </conflict>
</comment>
<sequence>MKTILPAVLFAAFATTSAWAAESVQPLEKIAPYPQAEKGMKRQVIQLTQQEDESTLKVELLIGQTLEVDCNLHRLGGKLESKTLEGWGYDYYVFDKVSSPVSTMMACPDGKKEKKFVTAYLGDAGMLRYNSKLPIVVYTPDNVDVKYRIWKAEEKIDNAVVR</sequence>
<feature type="signal peptide" evidence="1">
    <location>
        <begin position="1"/>
        <end position="20"/>
    </location>
</feature>
<feature type="chain" id="PRO_0000291615" description="Ecotin">
    <location>
        <begin position="21"/>
        <end position="162"/>
    </location>
</feature>
<feature type="site" description="Reactive bond" evidence="1">
    <location>
        <begin position="104"/>
        <end position="105"/>
    </location>
</feature>
<feature type="disulfide bond" evidence="1">
    <location>
        <begin position="70"/>
        <end position="107"/>
    </location>
</feature>
<organism>
    <name type="scientific">Escherichia coli (strain UTI89 / UPEC)</name>
    <dbReference type="NCBI Taxonomy" id="364106"/>
    <lineage>
        <taxon>Bacteria</taxon>
        <taxon>Pseudomonadati</taxon>
        <taxon>Pseudomonadota</taxon>
        <taxon>Gammaproteobacteria</taxon>
        <taxon>Enterobacterales</taxon>
        <taxon>Enterobacteriaceae</taxon>
        <taxon>Escherichia</taxon>
    </lineage>
</organism>
<accession>Q1R9K8</accession>
<reference key="1">
    <citation type="journal article" date="2006" name="Proc. Natl. Acad. Sci. U.S.A.">
        <title>Identification of genes subject to positive selection in uropathogenic strains of Escherichia coli: a comparative genomics approach.</title>
        <authorList>
            <person name="Chen S.L."/>
            <person name="Hung C.-S."/>
            <person name="Xu J."/>
            <person name="Reigstad C.S."/>
            <person name="Magrini V."/>
            <person name="Sabo A."/>
            <person name="Blasiar D."/>
            <person name="Bieri T."/>
            <person name="Meyer R.R."/>
            <person name="Ozersky P."/>
            <person name="Armstrong J.R."/>
            <person name="Fulton R.S."/>
            <person name="Latreille J.P."/>
            <person name="Spieth J."/>
            <person name="Hooton T.M."/>
            <person name="Mardis E.R."/>
            <person name="Hultgren S.J."/>
            <person name="Gordon J.I."/>
        </authorList>
    </citation>
    <scope>NUCLEOTIDE SEQUENCE [LARGE SCALE GENOMIC DNA]</scope>
    <source>
        <strain>UTI89 / UPEC</strain>
    </source>
</reference>